<name>SDT_ARATH</name>
<reference key="1">
    <citation type="journal article" date="1999" name="Nature">
        <title>Sequence and analysis of chromosome 2 of the plant Arabidopsis thaliana.</title>
        <authorList>
            <person name="Lin X."/>
            <person name="Kaul S."/>
            <person name="Rounsley S.D."/>
            <person name="Shea T.P."/>
            <person name="Benito M.-I."/>
            <person name="Town C.D."/>
            <person name="Fujii C.Y."/>
            <person name="Mason T.M."/>
            <person name="Bowman C.L."/>
            <person name="Barnstead M.E."/>
            <person name="Feldblyum T.V."/>
            <person name="Buell C.R."/>
            <person name="Ketchum K.A."/>
            <person name="Lee J.J."/>
            <person name="Ronning C.M."/>
            <person name="Koo H.L."/>
            <person name="Moffat K.S."/>
            <person name="Cronin L.A."/>
            <person name="Shen M."/>
            <person name="Pai G."/>
            <person name="Van Aken S."/>
            <person name="Umayam L."/>
            <person name="Tallon L.J."/>
            <person name="Gill J.E."/>
            <person name="Adams M.D."/>
            <person name="Carrera A.J."/>
            <person name="Creasy T.H."/>
            <person name="Goodman H.M."/>
            <person name="Somerville C.R."/>
            <person name="Copenhaver G.P."/>
            <person name="Preuss D."/>
            <person name="Nierman W.C."/>
            <person name="White O."/>
            <person name="Eisen J.A."/>
            <person name="Salzberg S.L."/>
            <person name="Fraser C.M."/>
            <person name="Venter J.C."/>
        </authorList>
    </citation>
    <scope>NUCLEOTIDE SEQUENCE [LARGE SCALE GENOMIC DNA]</scope>
    <source>
        <strain>cv. Columbia</strain>
    </source>
</reference>
<reference key="2">
    <citation type="journal article" date="2017" name="Plant J.">
        <title>Araport11: a complete reannotation of the Arabidopsis thaliana reference genome.</title>
        <authorList>
            <person name="Cheng C.Y."/>
            <person name="Krishnakumar V."/>
            <person name="Chan A.P."/>
            <person name="Thibaud-Nissen F."/>
            <person name="Schobel S."/>
            <person name="Town C.D."/>
        </authorList>
    </citation>
    <scope>GENOME REANNOTATION</scope>
    <source>
        <strain>cv. Columbia</strain>
    </source>
</reference>
<reference key="3">
    <citation type="journal article" date="2009" name="Plant Cell">
        <title>A novel polyamine acyltransferase responsible for the accumulation of spermidine conjugates in Arabidopsis seed.</title>
        <authorList>
            <person name="Luo J."/>
            <person name="Fuell C."/>
            <person name="Parr A."/>
            <person name="Hill L."/>
            <person name="Bailey P."/>
            <person name="Elliott K."/>
            <person name="Fairhurst S.A."/>
            <person name="Martin C."/>
            <person name="Michael A.J."/>
        </authorList>
    </citation>
    <scope>FUNCTION</scope>
    <scope>DISRUPTION PHENOTYPE</scope>
    <scope>TISSUE SPECIFICITY</scope>
    <scope>PATHWAY</scope>
    <scope>BIOPHYSICOCHEMICAL PROPERTIES</scope>
    <scope>CATALYTIC ACTIVITY</scope>
    <scope>DEVELOPMENTAL STAGE</scope>
    <source>
        <strain>cv. Columbia</strain>
    </source>
</reference>
<reference key="4">
    <citation type="journal article" date="2020" name="Front. Plant Sci.">
        <title>Structural and biochemical insights into two BAHD acyltransferases (AtSHT and AtSDT) involved in phenolamide biosynthesis.</title>
        <authorList>
            <person name="Wang C."/>
            <person name="Li J."/>
            <person name="Ma M."/>
            <person name="Lin Z."/>
            <person name="Hu W."/>
            <person name="Lin W."/>
            <person name="Zhang P."/>
        </authorList>
    </citation>
    <scope>X-RAY CRYSTALLOGRAPHY (2.40 ANGSTROMS)IN COMPLEX WITH SPERMIDINE</scope>
    <scope>FUNCTION</scope>
</reference>
<dbReference type="EC" id="2.3.1.248" evidence="3"/>
<dbReference type="EMBL" id="AC003040">
    <property type="protein sequence ID" value="AAC23766.1"/>
    <property type="molecule type" value="Genomic_DNA"/>
</dbReference>
<dbReference type="EMBL" id="CP002685">
    <property type="protein sequence ID" value="AEC07460.1"/>
    <property type="molecule type" value="Genomic_DNA"/>
</dbReference>
<dbReference type="PIR" id="T01140">
    <property type="entry name" value="T01140"/>
</dbReference>
<dbReference type="RefSeq" id="NP_179932.1">
    <property type="nucleotide sequence ID" value="NM_127915.2"/>
</dbReference>
<dbReference type="PDB" id="6LPW">
    <property type="method" value="X-ray"/>
    <property type="resolution" value="2.40 A"/>
    <property type="chains" value="A/B=1-451"/>
</dbReference>
<dbReference type="PDBsum" id="6LPW"/>
<dbReference type="SMR" id="O80467"/>
<dbReference type="STRING" id="3702.O80467"/>
<dbReference type="PaxDb" id="3702-AT2G23510.1"/>
<dbReference type="ProteomicsDB" id="232827"/>
<dbReference type="EnsemblPlants" id="AT2G23510.1">
    <property type="protein sequence ID" value="AT2G23510.1"/>
    <property type="gene ID" value="AT2G23510"/>
</dbReference>
<dbReference type="GeneID" id="816883"/>
<dbReference type="Gramene" id="AT2G23510.1">
    <property type="protein sequence ID" value="AT2G23510.1"/>
    <property type="gene ID" value="AT2G23510"/>
</dbReference>
<dbReference type="KEGG" id="ath:AT2G23510"/>
<dbReference type="Araport" id="AT2G23510"/>
<dbReference type="TAIR" id="AT2G23510">
    <property type="gene designation" value="SDT"/>
</dbReference>
<dbReference type="eggNOG" id="ENOG502RBEP">
    <property type="taxonomic scope" value="Eukaryota"/>
</dbReference>
<dbReference type="HOGENOM" id="CLU_014546_2_0_1"/>
<dbReference type="InParanoid" id="O80467"/>
<dbReference type="OMA" id="MAMSHAM"/>
<dbReference type="PhylomeDB" id="O80467"/>
<dbReference type="BioCyc" id="ARA:AT2G23510-MONOMER"/>
<dbReference type="BRENDA" id="2.3.1.248">
    <property type="organism ID" value="399"/>
</dbReference>
<dbReference type="UniPathway" id="UPA00819"/>
<dbReference type="PRO" id="PR:O80467"/>
<dbReference type="Proteomes" id="UP000006548">
    <property type="component" value="Chromosome 2"/>
</dbReference>
<dbReference type="ExpressionAtlas" id="O80467">
    <property type="expression patterns" value="baseline and differential"/>
</dbReference>
<dbReference type="GO" id="GO:0080089">
    <property type="term" value="F:sinapoyl spermidine:sinapoyl CoA N-acyltransferase activity"/>
    <property type="evidence" value="ECO:0000314"/>
    <property type="project" value="TAIR"/>
</dbReference>
<dbReference type="GO" id="GO:0080072">
    <property type="term" value="F:spermidine:sinapoyl CoA N-acyltransferase activity"/>
    <property type="evidence" value="ECO:0000314"/>
    <property type="project" value="TAIR"/>
</dbReference>
<dbReference type="GO" id="GO:0006596">
    <property type="term" value="P:polyamine biosynthetic process"/>
    <property type="evidence" value="ECO:0007669"/>
    <property type="project" value="UniProtKB-KW"/>
</dbReference>
<dbReference type="GO" id="GO:0008216">
    <property type="term" value="P:spermidine metabolic process"/>
    <property type="evidence" value="ECO:0007669"/>
    <property type="project" value="UniProtKB-UniPathway"/>
</dbReference>
<dbReference type="FunFam" id="3.30.559.10:FF:000084">
    <property type="entry name" value="Spermidine coumaroyl-CoA acyltransferase"/>
    <property type="match status" value="1"/>
</dbReference>
<dbReference type="FunFam" id="3.30.559.10:FF:000106">
    <property type="entry name" value="Spermidine sinapoyl-CoA acyltransferase"/>
    <property type="match status" value="1"/>
</dbReference>
<dbReference type="Gene3D" id="3.30.559.10">
    <property type="entry name" value="Chloramphenicol acetyltransferase-like domain"/>
    <property type="match status" value="2"/>
</dbReference>
<dbReference type="InterPro" id="IPR023213">
    <property type="entry name" value="CAT-like_dom_sf"/>
</dbReference>
<dbReference type="InterPro" id="IPR050898">
    <property type="entry name" value="Plant_acyltransferase"/>
</dbReference>
<dbReference type="PANTHER" id="PTHR31147">
    <property type="entry name" value="ACYL TRANSFERASE 4"/>
    <property type="match status" value="1"/>
</dbReference>
<dbReference type="PANTHER" id="PTHR31147:SF52">
    <property type="entry name" value="SPERMIDINE SINAPOYL-COA ACYLTRANSFERASE"/>
    <property type="match status" value="1"/>
</dbReference>
<dbReference type="Pfam" id="PF02458">
    <property type="entry name" value="Transferase"/>
    <property type="match status" value="1"/>
</dbReference>
<gene>
    <name evidence="5" type="primary">SDT</name>
    <name evidence="8" type="ordered locus">At2g23510</name>
    <name evidence="9" type="ORF">F26B6.16</name>
</gene>
<keyword id="KW-0002">3D-structure</keyword>
<keyword id="KW-0012">Acyltransferase</keyword>
<keyword id="KW-0620">Polyamine biosynthesis</keyword>
<keyword id="KW-1185">Reference proteome</keyword>
<keyword id="KW-0808">Transferase</keyword>
<sequence>MPIHIGSSIPLMVEKMLTEMVKPSKHIPQQTLNLSTLDNDPYNEVIYKACYVFKAKNVADDDNRPEALLREALSDLLGYYYPLSGSLKRQESDRKLQLSCGGDGGGVPFTVATANVELSSLKNLENIDSDTALNFLPVLHVDIDGYRPFALQVTKFECGGFILGMAMSHAMCDGYGEGHIMCALTDLAGGKKKPMVTPIWERERLVGKPEDDQPPFVPGDDTAASPYLPTDDWVTEKITIRADSIRRLKEATLKEYDFSNETITTFEVIGAYLWKSRVKALNLDRDGVTVLGLSVGIRNVVDPPLPDGYYGNAYIDMYVPLTAREVEEFTISDIVKLIKEAKRNAHDKDYLQEELANTEKIIKMNLTIKGKKDGLFCLTDWRNIGIFGSMDFGWDEPVNIVPVVPSETARTVNMFMRPSRLESDMVGGVQIVVTLPRIAMVKFKEEMEALE</sequence>
<feature type="chain" id="PRO_0000432771" description="Spermidine sinapoyl-CoA acyltransferase">
    <location>
        <begin position="1"/>
        <end position="451"/>
    </location>
</feature>
<feature type="active site" description="Proton acceptor" evidence="1">
    <location>
        <position position="169"/>
    </location>
</feature>
<feature type="active site" description="Proton acceptor" evidence="1">
    <location>
        <position position="391"/>
    </location>
</feature>
<feature type="binding site" evidence="4 11">
    <location>
        <position position="47"/>
    </location>
    <ligand>
        <name>spermidine</name>
        <dbReference type="ChEBI" id="CHEBI:57834"/>
    </ligand>
</feature>
<feature type="binding site" evidence="4 11">
    <location>
        <position position="169"/>
    </location>
    <ligand>
        <name>spermidine</name>
        <dbReference type="ChEBI" id="CHEBI:57834"/>
    </ligand>
</feature>
<feature type="binding site" evidence="4 11">
    <location>
        <position position="294"/>
    </location>
    <ligand>
        <name>spermidine</name>
        <dbReference type="ChEBI" id="CHEBI:57834"/>
    </ligand>
</feature>
<feature type="binding site" evidence="4 11">
    <location>
        <position position="316"/>
    </location>
    <ligand>
        <name>spermidine</name>
        <dbReference type="ChEBI" id="CHEBI:57834"/>
    </ligand>
</feature>
<feature type="binding site" evidence="4 11">
    <location>
        <position position="378"/>
    </location>
    <ligand>
        <name>spermidine</name>
        <dbReference type="ChEBI" id="CHEBI:57834"/>
    </ligand>
</feature>
<feature type="strand" evidence="12">
    <location>
        <begin position="13"/>
        <end position="21"/>
    </location>
</feature>
<feature type="strand" evidence="12">
    <location>
        <begin position="30"/>
        <end position="33"/>
    </location>
</feature>
<feature type="helix" evidence="12">
    <location>
        <begin position="36"/>
        <end position="39"/>
    </location>
</feature>
<feature type="helix" evidence="12">
    <location>
        <begin position="41"/>
        <end position="43"/>
    </location>
</feature>
<feature type="strand" evidence="12">
    <location>
        <begin position="45"/>
        <end position="53"/>
    </location>
</feature>
<feature type="helix" evidence="12">
    <location>
        <begin position="65"/>
        <end position="79"/>
    </location>
</feature>
<feature type="helix" evidence="12">
    <location>
        <begin position="81"/>
        <end position="84"/>
    </location>
</feature>
<feature type="strand" evidence="12">
    <location>
        <begin position="85"/>
        <end position="89"/>
    </location>
</feature>
<feature type="turn" evidence="12">
    <location>
        <begin position="91"/>
        <end position="93"/>
    </location>
</feature>
<feature type="strand" evidence="12">
    <location>
        <begin position="96"/>
        <end position="101"/>
    </location>
</feature>
<feature type="strand" evidence="12">
    <location>
        <begin position="107"/>
        <end position="116"/>
    </location>
</feature>
<feature type="helix" evidence="12">
    <location>
        <begin position="118"/>
        <end position="124"/>
    </location>
</feature>
<feature type="helix" evidence="12">
    <location>
        <begin position="129"/>
        <end position="132"/>
    </location>
</feature>
<feature type="helix" evidence="12">
    <location>
        <begin position="133"/>
        <end position="135"/>
    </location>
</feature>
<feature type="strand" evidence="12">
    <location>
        <begin position="148"/>
        <end position="155"/>
    </location>
</feature>
<feature type="strand" evidence="12">
    <location>
        <begin position="161"/>
        <end position="168"/>
    </location>
</feature>
<feature type="turn" evidence="12">
    <location>
        <begin position="169"/>
        <end position="171"/>
    </location>
</feature>
<feature type="helix" evidence="12">
    <location>
        <begin position="174"/>
        <end position="188"/>
    </location>
</feature>
<feature type="helix" evidence="12">
    <location>
        <begin position="202"/>
        <end position="205"/>
    </location>
</feature>
<feature type="turn" evidence="12">
    <location>
        <begin position="218"/>
        <end position="221"/>
    </location>
</feature>
<feature type="strand" evidence="12">
    <location>
        <begin position="233"/>
        <end position="240"/>
    </location>
</feature>
<feature type="helix" evidence="12">
    <location>
        <begin position="242"/>
        <end position="255"/>
    </location>
</feature>
<feature type="helix" evidence="12">
    <location>
        <begin position="265"/>
        <end position="281"/>
    </location>
</feature>
<feature type="strand" evidence="12">
    <location>
        <begin position="287"/>
        <end position="296"/>
    </location>
</feature>
<feature type="turn" evidence="12">
    <location>
        <begin position="298"/>
        <end position="300"/>
    </location>
</feature>
<feature type="strand" evidence="12">
    <location>
        <begin position="301"/>
        <end position="303"/>
    </location>
</feature>
<feature type="strand" evidence="12">
    <location>
        <begin position="314"/>
        <end position="322"/>
    </location>
</feature>
<feature type="helix" evidence="12">
    <location>
        <begin position="323"/>
        <end position="328"/>
    </location>
</feature>
<feature type="helix" evidence="12">
    <location>
        <begin position="331"/>
        <end position="345"/>
    </location>
</feature>
<feature type="helix" evidence="12">
    <location>
        <begin position="348"/>
        <end position="364"/>
    </location>
</feature>
<feature type="strand" evidence="12">
    <location>
        <begin position="376"/>
        <end position="380"/>
    </location>
</feature>
<feature type="helix" evidence="12">
    <location>
        <begin position="382"/>
        <end position="385"/>
    </location>
</feature>
<feature type="strand" evidence="12">
    <location>
        <begin position="392"/>
        <end position="394"/>
    </location>
</feature>
<feature type="strand" evidence="12">
    <location>
        <begin position="398"/>
        <end position="403"/>
    </location>
</feature>
<feature type="turn" evidence="12">
    <location>
        <begin position="406"/>
        <end position="411"/>
    </location>
</feature>
<feature type="strand" evidence="12">
    <location>
        <begin position="412"/>
        <end position="416"/>
    </location>
</feature>
<feature type="helix" evidence="12">
    <location>
        <begin position="423"/>
        <end position="425"/>
    </location>
</feature>
<feature type="strand" evidence="12">
    <location>
        <begin position="429"/>
        <end position="436"/>
    </location>
</feature>
<feature type="helix" evidence="12">
    <location>
        <begin position="437"/>
        <end position="448"/>
    </location>
</feature>
<proteinExistence type="evidence at protein level"/>
<accession>O80467</accession>
<comment type="function">
    <text evidence="3 4">Spermidine sinapoyl-CoA acyltransferase that mediates the accumulation of disinapoyl spermidine conjugates in seeds (PubMed:19168716). Catalyzes the two conjugating steps required for the biosynthesis of N1,N8-disipanoyl-spermidine (PubMed:19168716, PubMed:33519864). Can also use putrescine as an acyl acceptor to convert it into monosinapoyl-putrescine (PubMed:19168716).</text>
</comment>
<comment type="catalytic activity">
    <reaction evidence="3">
        <text>2 (E)-sinapoyl-CoA + spermidine = N(1),N(8)-bis[(E)-sinapoyl]-spermidine + 2 CoA + 2 H(+)</text>
        <dbReference type="Rhea" id="RHEA:45168"/>
        <dbReference type="ChEBI" id="CHEBI:15378"/>
        <dbReference type="ChEBI" id="CHEBI:57287"/>
        <dbReference type="ChEBI" id="CHEBI:57393"/>
        <dbReference type="ChEBI" id="CHEBI:57834"/>
        <dbReference type="ChEBI" id="CHEBI:85006"/>
        <dbReference type="EC" id="2.3.1.248"/>
    </reaction>
</comment>
<comment type="biophysicochemical properties">
    <kinetics>
        <KM evidence="3">8.3 uM for sinapoyl-CoA (with spermidine as the acyl acceptor, at 30 degrees Celsius)</KM>
        <KM evidence="3">37.4 uM for spermidine (with sinapoyl-CoA as the acyl donor, at 30 degrees Celsius)</KM>
        <KM evidence="3">236.9 uM for putrescine (with sinapoyl-CoA as the acyl donor, at 30 degrees Celsius)</KM>
        <KM evidence="3">34.6 uM for disinapoyl-spermidine (with CoA as cosubstrate, at 30 degrees Celsius)</KM>
        <KM evidence="3">83.6 uM for CoA (with disinapoyl-spermidine as cosubstrate, at 30 degrees Celsius)</KM>
        <text evidence="3">kcat is 5.1 sec(-1) with sinapoyl-CoA as substrate (in the presence of spermidine as the acyl acceptor). kcat is 5.6 sec(-1) with spermidine as substrate (in the presence of sinapoyl-CoA as the acyl donor). kcat is 0.3 sec(-1) with putrescine as substrate (in the presence of sinapoyl-CoA as the acyl donor). kcat is 37.8 sec(-1) with disinapoyl-spermidine as substrate (in the presence of CoA as cosubstrate). kcat is 39.6 sec(-1) with CoA as substrate (in the presence of disinapoyl-spermidine as cosubstrate). All analyses are done at 30 degrees Celsius.</text>
    </kinetics>
    <phDependence>
        <text evidence="3">Optimum pH is 9 using spermidine and sinapoyl-CoA as substrates.</text>
    </phDependence>
</comment>
<comment type="pathway">
    <text evidence="3">Amine and polyamine metabolism; spermidine metabolism.</text>
</comment>
<comment type="subunit">
    <text evidence="2">Monomer.</text>
</comment>
<comment type="tissue specificity">
    <text evidence="3">Predominantly expressed in siliques, especially in seeds around the embryo, and, at low levels, in flowers. Barely detectable in stems, leaves, and roots.</text>
</comment>
<comment type="developmental stage">
    <text evidence="3">Strongly expressed in the cotyledons and emerging radical of the germinating seeds one day after imbibition. Accumulates in the root tip of young seedlings and in the cotyledons and the basal region of the hypocotyl as the seedlings emerges from the seed coat three days after imbibition. Later confined to the basal region of the hypocotyls and to the root tip before progressively disappearing.</text>
</comment>
<comment type="disruption phenotype">
    <text evidence="3">Impaired disinapoyl spermidine conjugates accumulation in seeds.</text>
</comment>
<comment type="similarity">
    <text evidence="7">Belongs to the plant acyltransferase family.</text>
</comment>
<organism evidence="10">
    <name type="scientific">Arabidopsis thaliana</name>
    <name type="common">Mouse-ear cress</name>
    <dbReference type="NCBI Taxonomy" id="3702"/>
    <lineage>
        <taxon>Eukaryota</taxon>
        <taxon>Viridiplantae</taxon>
        <taxon>Streptophyta</taxon>
        <taxon>Embryophyta</taxon>
        <taxon>Tracheophyta</taxon>
        <taxon>Spermatophyta</taxon>
        <taxon>Magnoliopsida</taxon>
        <taxon>eudicotyledons</taxon>
        <taxon>Gunneridae</taxon>
        <taxon>Pentapetalae</taxon>
        <taxon>rosids</taxon>
        <taxon>malvids</taxon>
        <taxon>Brassicales</taxon>
        <taxon>Brassicaceae</taxon>
        <taxon>Camelineae</taxon>
        <taxon>Arabidopsis</taxon>
    </lineage>
</organism>
<evidence type="ECO:0000250" key="1">
    <source>
        <dbReference type="UniProtKB" id="Q70PR7"/>
    </source>
</evidence>
<evidence type="ECO:0000250" key="2">
    <source>
        <dbReference type="UniProtKB" id="Q9M6E2"/>
    </source>
</evidence>
<evidence type="ECO:0000269" key="3">
    <source>
    </source>
</evidence>
<evidence type="ECO:0000269" key="4">
    <source>
    </source>
</evidence>
<evidence type="ECO:0000303" key="5">
    <source>
    </source>
</evidence>
<evidence type="ECO:0000303" key="6">
    <source>
    </source>
</evidence>
<evidence type="ECO:0000305" key="7"/>
<evidence type="ECO:0000312" key="8">
    <source>
        <dbReference type="Araport" id="AT2G23510"/>
    </source>
</evidence>
<evidence type="ECO:0000312" key="9">
    <source>
        <dbReference type="EMBL" id="AAC23766.1"/>
    </source>
</evidence>
<evidence type="ECO:0000312" key="10">
    <source>
        <dbReference type="Proteomes" id="UP000006548"/>
    </source>
</evidence>
<evidence type="ECO:0007744" key="11">
    <source>
        <dbReference type="PDB" id="6LPW"/>
    </source>
</evidence>
<evidence type="ECO:0007829" key="12">
    <source>
        <dbReference type="PDB" id="6LPW"/>
    </source>
</evidence>
<protein>
    <recommendedName>
        <fullName evidence="5">Spermidine sinapoyl-CoA acyltransferase</fullName>
        <shortName evidence="6">AtSDT</shortName>
        <shortName evidence="5">Spermidine disinapoyl transferase</shortName>
        <ecNumber evidence="3">2.3.1.248</ecNumber>
    </recommendedName>
</protein>